<proteinExistence type="evidence at protein level"/>
<organism>
    <name type="scientific">Mycobacterium tuberculosis (strain ATCC 25618 / H37Rv)</name>
    <dbReference type="NCBI Taxonomy" id="83332"/>
    <lineage>
        <taxon>Bacteria</taxon>
        <taxon>Bacillati</taxon>
        <taxon>Actinomycetota</taxon>
        <taxon>Actinomycetes</taxon>
        <taxon>Mycobacteriales</taxon>
        <taxon>Mycobacteriaceae</taxon>
        <taxon>Mycobacterium</taxon>
        <taxon>Mycobacterium tuberculosis complex</taxon>
    </lineage>
</organism>
<gene>
    <name evidence="1" type="primary">miaA</name>
    <name type="ordered locus">Rv2727c</name>
    <name type="ORF">MTCY154.07c</name>
</gene>
<feature type="chain" id="PRO_0000163942" description="tRNA dimethylallyltransferase">
    <location>
        <begin position="1"/>
        <end position="314"/>
    </location>
</feature>
<feature type="binding site" evidence="1">
    <location>
        <begin position="8"/>
        <end position="15"/>
    </location>
    <ligand>
        <name>ATP</name>
        <dbReference type="ChEBI" id="CHEBI:30616"/>
    </ligand>
</feature>
<feature type="binding site" evidence="1">
    <location>
        <begin position="10"/>
        <end position="15"/>
    </location>
    <ligand>
        <name>substrate</name>
    </ligand>
</feature>
<feature type="site" description="Interaction with substrate tRNA" evidence="1">
    <location>
        <position position="103"/>
    </location>
</feature>
<feature type="site" description="Interaction with substrate tRNA" evidence="1">
    <location>
        <position position="124"/>
    </location>
</feature>
<keyword id="KW-0067">ATP-binding</keyword>
<keyword id="KW-0460">Magnesium</keyword>
<keyword id="KW-0547">Nucleotide-binding</keyword>
<keyword id="KW-1185">Reference proteome</keyword>
<keyword id="KW-0808">Transferase</keyword>
<keyword id="KW-0819">tRNA processing</keyword>
<comment type="function">
    <text evidence="1">Catalyzes the transfer of a dimethylallyl group onto the adenine at position 37 in tRNAs that read codons beginning with uridine, leading to the formation of N6-(dimethylallyl)adenosine (i(6)A).</text>
</comment>
<comment type="catalytic activity">
    <reaction evidence="1">
        <text>adenosine(37) in tRNA + dimethylallyl diphosphate = N(6)-dimethylallyladenosine(37) in tRNA + diphosphate</text>
        <dbReference type="Rhea" id="RHEA:26482"/>
        <dbReference type="Rhea" id="RHEA-COMP:10162"/>
        <dbReference type="Rhea" id="RHEA-COMP:10375"/>
        <dbReference type="ChEBI" id="CHEBI:33019"/>
        <dbReference type="ChEBI" id="CHEBI:57623"/>
        <dbReference type="ChEBI" id="CHEBI:74411"/>
        <dbReference type="ChEBI" id="CHEBI:74415"/>
        <dbReference type="EC" id="2.5.1.75"/>
    </reaction>
</comment>
<comment type="cofactor">
    <cofactor evidence="1">
        <name>Mg(2+)</name>
        <dbReference type="ChEBI" id="CHEBI:18420"/>
    </cofactor>
</comment>
<comment type="subunit">
    <text evidence="1">Monomer.</text>
</comment>
<comment type="miscellaneous">
    <text>Was identified as a high-confidence drug target.</text>
</comment>
<comment type="similarity">
    <text evidence="1">Belongs to the IPP transferase family.</text>
</comment>
<sequence>MRPLAIIGPTGAGKSQLALDVAARLGARVSVEIVNADAMQLYRGMDIGTAKLPVSERRGIPHHQLDVLDVTETATVARYQRAAAADIEAIAARGAVPVVVGGSMLYVQSLLDDWSFPATDPSVRARWERRLAEVGVDRLHAELARRDPAAAAAILPTDARRTVRALEVVELTGQPFAASAPRIGAPRWDTVIVGLDCQTTILDERLARRTDLMFDQGLVEEVRTLLRNGLREGVTASRALGYAQVIAALDAGAGADMMRAAREQTYLGTRRYVRRQRSWFRRDHRVHWLDAGVASSPDRARLVDDAVRLWRHVT</sequence>
<reference key="1">
    <citation type="journal article" date="1998" name="Nature">
        <title>Deciphering the biology of Mycobacterium tuberculosis from the complete genome sequence.</title>
        <authorList>
            <person name="Cole S.T."/>
            <person name="Brosch R."/>
            <person name="Parkhill J."/>
            <person name="Garnier T."/>
            <person name="Churcher C.M."/>
            <person name="Harris D.E."/>
            <person name="Gordon S.V."/>
            <person name="Eiglmeier K."/>
            <person name="Gas S."/>
            <person name="Barry C.E. III"/>
            <person name="Tekaia F."/>
            <person name="Badcock K."/>
            <person name="Basham D."/>
            <person name="Brown D."/>
            <person name="Chillingworth T."/>
            <person name="Connor R."/>
            <person name="Davies R.M."/>
            <person name="Devlin K."/>
            <person name="Feltwell T."/>
            <person name="Gentles S."/>
            <person name="Hamlin N."/>
            <person name="Holroyd S."/>
            <person name="Hornsby T."/>
            <person name="Jagels K."/>
            <person name="Krogh A."/>
            <person name="McLean J."/>
            <person name="Moule S."/>
            <person name="Murphy L.D."/>
            <person name="Oliver S."/>
            <person name="Osborne J."/>
            <person name="Quail M.A."/>
            <person name="Rajandream M.A."/>
            <person name="Rogers J."/>
            <person name="Rutter S."/>
            <person name="Seeger K."/>
            <person name="Skelton S."/>
            <person name="Squares S."/>
            <person name="Squares R."/>
            <person name="Sulston J.E."/>
            <person name="Taylor K."/>
            <person name="Whitehead S."/>
            <person name="Barrell B.G."/>
        </authorList>
    </citation>
    <scope>NUCLEOTIDE SEQUENCE [LARGE SCALE GENOMIC DNA]</scope>
    <source>
        <strain>ATCC 25618 / H37Rv</strain>
    </source>
</reference>
<reference key="2">
    <citation type="journal article" date="2008" name="BMC Syst. Biol.">
        <title>targetTB: a target identification pipeline for Mycobacterium tuberculosis through an interactome, reactome and genome-scale structural analysis.</title>
        <authorList>
            <person name="Raman K."/>
            <person name="Yeturu K."/>
            <person name="Chandra N."/>
        </authorList>
    </citation>
    <scope>IDENTIFICATION AS A DRUG TARGET [LARGE SCALE ANALYSIS]</scope>
</reference>
<reference key="3">
    <citation type="journal article" date="2011" name="Mol. Cell. Proteomics">
        <title>Proteogenomic analysis of Mycobacterium tuberculosis by high resolution mass spectrometry.</title>
        <authorList>
            <person name="Kelkar D.S."/>
            <person name="Kumar D."/>
            <person name="Kumar P."/>
            <person name="Balakrishnan L."/>
            <person name="Muthusamy B."/>
            <person name="Yadav A.K."/>
            <person name="Shrivastava P."/>
            <person name="Marimuthu A."/>
            <person name="Anand S."/>
            <person name="Sundaram H."/>
            <person name="Kingsbury R."/>
            <person name="Harsha H.C."/>
            <person name="Nair B."/>
            <person name="Prasad T.S."/>
            <person name="Chauhan D.S."/>
            <person name="Katoch K."/>
            <person name="Katoch V.M."/>
            <person name="Kumar P."/>
            <person name="Chaerkady R."/>
            <person name="Ramachandran S."/>
            <person name="Dash D."/>
            <person name="Pandey A."/>
        </authorList>
    </citation>
    <scope>IDENTIFICATION BY MASS SPECTROMETRY [LARGE SCALE ANALYSIS]</scope>
    <source>
        <strain>ATCC 25618 / H37Rv</strain>
    </source>
</reference>
<protein>
    <recommendedName>
        <fullName evidence="1">tRNA dimethylallyltransferase</fullName>
        <ecNumber evidence="1">2.5.1.75</ecNumber>
    </recommendedName>
    <alternativeName>
        <fullName evidence="1">Dimethylallyl diphosphate:tRNA dimethylallyltransferase</fullName>
        <shortName evidence="1">DMAPP:tRNA dimethylallyltransferase</shortName>
        <shortName evidence="1">DMATase</shortName>
    </alternativeName>
    <alternativeName>
        <fullName evidence="1">Isopentenyl-diphosphate:tRNA isopentenyltransferase</fullName>
        <shortName evidence="1">IPP transferase</shortName>
        <shortName evidence="1">IPPT</shortName>
        <shortName evidence="1">IPTase</shortName>
    </alternativeName>
</protein>
<name>MIAA_MYCTU</name>
<dbReference type="EC" id="2.5.1.75" evidence="1"/>
<dbReference type="EMBL" id="AL123456">
    <property type="protein sequence ID" value="CCP45525.1"/>
    <property type="molecule type" value="Genomic_DNA"/>
</dbReference>
<dbReference type="PIR" id="F70505">
    <property type="entry name" value="F70505"/>
</dbReference>
<dbReference type="RefSeq" id="NP_217243.1">
    <property type="nucleotide sequence ID" value="NC_000962.3"/>
</dbReference>
<dbReference type="RefSeq" id="WP_003413989.1">
    <property type="nucleotide sequence ID" value="NZ_NVQJ01000017.1"/>
</dbReference>
<dbReference type="SMR" id="P9WJW1"/>
<dbReference type="FunCoup" id="P9WJW1">
    <property type="interactions" value="443"/>
</dbReference>
<dbReference type="STRING" id="83332.Rv2727c"/>
<dbReference type="PaxDb" id="83332-Rv2727c"/>
<dbReference type="DNASU" id="887242"/>
<dbReference type="GeneID" id="45426714"/>
<dbReference type="GeneID" id="887242"/>
<dbReference type="KEGG" id="mtu:Rv2727c"/>
<dbReference type="KEGG" id="mtv:RVBD_2727c"/>
<dbReference type="TubercuList" id="Rv2727c"/>
<dbReference type="eggNOG" id="COG0324">
    <property type="taxonomic scope" value="Bacteria"/>
</dbReference>
<dbReference type="InParanoid" id="P9WJW1"/>
<dbReference type="OrthoDB" id="9776390at2"/>
<dbReference type="PhylomeDB" id="P9WJW1"/>
<dbReference type="Proteomes" id="UP000001584">
    <property type="component" value="Chromosome"/>
</dbReference>
<dbReference type="GO" id="GO:0005524">
    <property type="term" value="F:ATP binding"/>
    <property type="evidence" value="ECO:0007669"/>
    <property type="project" value="UniProtKB-UniRule"/>
</dbReference>
<dbReference type="GO" id="GO:0052381">
    <property type="term" value="F:tRNA dimethylallyltransferase activity"/>
    <property type="evidence" value="ECO:0000318"/>
    <property type="project" value="GO_Central"/>
</dbReference>
<dbReference type="GO" id="GO:0006400">
    <property type="term" value="P:tRNA modification"/>
    <property type="evidence" value="ECO:0000318"/>
    <property type="project" value="GO_Central"/>
</dbReference>
<dbReference type="FunFam" id="1.10.20.140:FF:000001">
    <property type="entry name" value="tRNA dimethylallyltransferase"/>
    <property type="match status" value="1"/>
</dbReference>
<dbReference type="Gene3D" id="1.10.20.140">
    <property type="match status" value="1"/>
</dbReference>
<dbReference type="Gene3D" id="3.40.50.300">
    <property type="entry name" value="P-loop containing nucleotide triphosphate hydrolases"/>
    <property type="match status" value="1"/>
</dbReference>
<dbReference type="HAMAP" id="MF_00185">
    <property type="entry name" value="IPP_trans"/>
    <property type="match status" value="1"/>
</dbReference>
<dbReference type="InterPro" id="IPR039657">
    <property type="entry name" value="Dimethylallyltransferase"/>
</dbReference>
<dbReference type="InterPro" id="IPR018022">
    <property type="entry name" value="IPT"/>
</dbReference>
<dbReference type="InterPro" id="IPR027417">
    <property type="entry name" value="P-loop_NTPase"/>
</dbReference>
<dbReference type="NCBIfam" id="TIGR00174">
    <property type="entry name" value="miaA"/>
    <property type="match status" value="1"/>
</dbReference>
<dbReference type="PANTHER" id="PTHR11088">
    <property type="entry name" value="TRNA DIMETHYLALLYLTRANSFERASE"/>
    <property type="match status" value="1"/>
</dbReference>
<dbReference type="PANTHER" id="PTHR11088:SF60">
    <property type="entry name" value="TRNA DIMETHYLALLYLTRANSFERASE"/>
    <property type="match status" value="1"/>
</dbReference>
<dbReference type="Pfam" id="PF01715">
    <property type="entry name" value="IPPT"/>
    <property type="match status" value="1"/>
</dbReference>
<dbReference type="SUPFAM" id="SSF52540">
    <property type="entry name" value="P-loop containing nucleoside triphosphate hydrolases"/>
    <property type="match status" value="1"/>
</dbReference>
<accession>P9WJW1</accession>
<accession>L0TAG4</accession>
<accession>O33232</accession>
<accession>P65352</accession>
<evidence type="ECO:0000255" key="1">
    <source>
        <dbReference type="HAMAP-Rule" id="MF_00185"/>
    </source>
</evidence>